<accession>Q5Z5C9</accession>
<accession>Q0DCQ0</accession>
<reference key="1">
    <citation type="journal article" date="2005" name="Nature">
        <title>The map-based sequence of the rice genome.</title>
        <authorList>
            <consortium name="International rice genome sequencing project (IRGSP)"/>
        </authorList>
    </citation>
    <scope>NUCLEOTIDE SEQUENCE [LARGE SCALE GENOMIC DNA]</scope>
    <source>
        <strain>cv. Nipponbare</strain>
    </source>
</reference>
<reference key="2">
    <citation type="journal article" date="2008" name="Nucleic Acids Res.">
        <title>The rice annotation project database (RAP-DB): 2008 update.</title>
        <authorList>
            <consortium name="The rice annotation project (RAP)"/>
        </authorList>
    </citation>
    <scope>GENOME REANNOTATION</scope>
    <source>
        <strain>cv. Nipponbare</strain>
    </source>
</reference>
<reference key="3">
    <citation type="journal article" date="2013" name="Rice">
        <title>Improvement of the Oryza sativa Nipponbare reference genome using next generation sequence and optical map data.</title>
        <authorList>
            <person name="Kawahara Y."/>
            <person name="de la Bastide M."/>
            <person name="Hamilton J.P."/>
            <person name="Kanamori H."/>
            <person name="McCombie W.R."/>
            <person name="Ouyang S."/>
            <person name="Schwartz D.C."/>
            <person name="Tanaka T."/>
            <person name="Wu J."/>
            <person name="Zhou S."/>
            <person name="Childs K.L."/>
            <person name="Davidson R.M."/>
            <person name="Lin H."/>
            <person name="Quesada-Ocampo L."/>
            <person name="Vaillancourt B."/>
            <person name="Sakai H."/>
            <person name="Lee S.S."/>
            <person name="Kim J."/>
            <person name="Numa H."/>
            <person name="Itoh T."/>
            <person name="Buell C.R."/>
            <person name="Matsumoto T."/>
        </authorList>
    </citation>
    <scope>GENOME REANNOTATION</scope>
    <source>
        <strain>cv. Nipponbare</strain>
    </source>
</reference>
<reference key="4">
    <citation type="journal article" date="2003" name="Science">
        <title>Collection, mapping, and annotation of over 28,000 cDNA clones from japonica rice.</title>
        <authorList>
            <consortium name="The rice full-length cDNA consortium"/>
        </authorList>
    </citation>
    <scope>NUCLEOTIDE SEQUENCE [LARGE SCALE MRNA]</scope>
    <source>
        <strain>cv. Nipponbare</strain>
    </source>
</reference>
<reference key="5">
    <citation type="journal article" date="2009" name="Planta">
        <title>Genome-wide identification of BURP domain-containing genes in rice reveals a gene family with diverse structures and responses to abiotic stresses.</title>
        <authorList>
            <person name="Ding X."/>
            <person name="Hou X."/>
            <person name="Xie K."/>
            <person name="Xiong L."/>
        </authorList>
    </citation>
    <scope>TISSUE SPECIFICITY</scope>
    <scope>GENE NOMENCLATURE</scope>
</reference>
<name>BURPB_ORYSJ</name>
<dbReference type="EMBL" id="AP004007">
    <property type="protein sequence ID" value="BAD53988.1"/>
    <property type="molecule type" value="Genomic_DNA"/>
</dbReference>
<dbReference type="EMBL" id="AP005748">
    <property type="protein sequence ID" value="BAD62094.1"/>
    <property type="molecule type" value="Genomic_DNA"/>
</dbReference>
<dbReference type="EMBL" id="AP008212">
    <property type="protein sequence ID" value="BAF19373.1"/>
    <property type="status" value="ALT_SEQ"/>
    <property type="molecule type" value="Genomic_DNA"/>
</dbReference>
<dbReference type="EMBL" id="AP014962">
    <property type="status" value="NOT_ANNOTATED_CDS"/>
    <property type="molecule type" value="Genomic_DNA"/>
</dbReference>
<dbReference type="EMBL" id="AK106070">
    <property type="status" value="NOT_ANNOTATED_CDS"/>
    <property type="molecule type" value="mRNA"/>
</dbReference>
<dbReference type="SMR" id="Q5Z5C9"/>
<dbReference type="FunCoup" id="Q5Z5C9">
    <property type="interactions" value="21"/>
</dbReference>
<dbReference type="STRING" id="39947.Q5Z5C9"/>
<dbReference type="PaxDb" id="39947-Q5Z5C9"/>
<dbReference type="InParanoid" id="Q5Z5C9"/>
<dbReference type="Proteomes" id="UP000000763">
    <property type="component" value="Chromosome 6"/>
</dbReference>
<dbReference type="Proteomes" id="UP000059680">
    <property type="component" value="Chromosome 6"/>
</dbReference>
<dbReference type="InterPro" id="IPR044816">
    <property type="entry name" value="BURP"/>
</dbReference>
<dbReference type="InterPro" id="IPR004873">
    <property type="entry name" value="BURP_dom"/>
</dbReference>
<dbReference type="PANTHER" id="PTHR31236">
    <property type="entry name" value="BURP DOMAIN PROTEIN USPL1-LIKE"/>
    <property type="match status" value="1"/>
</dbReference>
<dbReference type="PANTHER" id="PTHR31236:SF21">
    <property type="entry name" value="BURP DOMAIN-CONTAINING PROTEIN 11"/>
    <property type="match status" value="1"/>
</dbReference>
<dbReference type="Pfam" id="PF03181">
    <property type="entry name" value="BURP"/>
    <property type="match status" value="1"/>
</dbReference>
<dbReference type="SMART" id="SM01045">
    <property type="entry name" value="BURP"/>
    <property type="match status" value="1"/>
</dbReference>
<dbReference type="PROSITE" id="PS51277">
    <property type="entry name" value="BURP"/>
    <property type="match status" value="1"/>
</dbReference>
<organism>
    <name type="scientific">Oryza sativa subsp. japonica</name>
    <name type="common">Rice</name>
    <dbReference type="NCBI Taxonomy" id="39947"/>
    <lineage>
        <taxon>Eukaryota</taxon>
        <taxon>Viridiplantae</taxon>
        <taxon>Streptophyta</taxon>
        <taxon>Embryophyta</taxon>
        <taxon>Tracheophyta</taxon>
        <taxon>Spermatophyta</taxon>
        <taxon>Magnoliopsida</taxon>
        <taxon>Liliopsida</taxon>
        <taxon>Poales</taxon>
        <taxon>Poaceae</taxon>
        <taxon>BOP clade</taxon>
        <taxon>Oryzoideae</taxon>
        <taxon>Oryzeae</taxon>
        <taxon>Oryzinae</taxon>
        <taxon>Oryza</taxon>
        <taxon>Oryza sativa</taxon>
    </lineage>
</organism>
<keyword id="KW-1185">Reference proteome</keyword>
<sequence length="328" mass="35234">MKGYMEDREHEKSLQAEKEELKEVSVSYGHEVKLSNLFPTRFGHKNYQHTFEGMDHGRHVHAHGNKMQQLADVFFFRDALRPGSVITPTIPPTTSLPAFLPRHVADAIPFSADRFADVLAMFAPASLAMAREIRWALDTCGQRAAALLPGEKAGCATSLESLADLAASLLGTRDVRAFSAADLPTDAATTPARRGRYNVTSVRELSAMAGSGSSSSSEPAPAAVVACHDLTYPYAVFYCHSTKPTAAYAVTLVAATTGDGDGEGEAASPAKMEALAVCHLDTSRWRADNPFFVAHGVKPGEVSVCHFLTKLSIVWVPRHEQGGPRAAA</sequence>
<comment type="tissue specificity">
    <text evidence="2">Expressed in roots.</text>
</comment>
<comment type="caution">
    <text evidence="3">Lacks the conserved signal peptide, which is one of the features of the BURP domain-containing proteins.</text>
</comment>
<comment type="sequence caution" evidence="3">
    <conflict type="erroneous gene model prediction">
        <sequence resource="EMBL-CDS" id="BAF19373"/>
    </conflict>
</comment>
<gene>
    <name type="primary">BURP11</name>
    <name type="ordered locus">Os06g0302000</name>
    <name type="ordered locus">LOC_Os06g19800</name>
    <name type="ORF">OJ1217_C01.19</name>
    <name type="ORF">OSJNBa0042E12.9</name>
</gene>
<feature type="chain" id="PRO_0000375838" description="BURP domain-containing protein 11">
    <location>
        <begin position="1"/>
        <end position="328"/>
    </location>
</feature>
<feature type="domain" description="BURP" evidence="1">
    <location>
        <begin position="74"/>
        <end position="318"/>
    </location>
</feature>
<protein>
    <recommendedName>
        <fullName>BURP domain-containing protein 11</fullName>
        <shortName>OsBURP11</shortName>
    </recommendedName>
</protein>
<proteinExistence type="evidence at transcript level"/>
<evidence type="ECO:0000255" key="1">
    <source>
        <dbReference type="PROSITE-ProRule" id="PRU00604"/>
    </source>
</evidence>
<evidence type="ECO:0000269" key="2">
    <source>
    </source>
</evidence>
<evidence type="ECO:0000305" key="3"/>